<dbReference type="EC" id="6.1.1.14" evidence="1"/>
<dbReference type="EMBL" id="AM181176">
    <property type="protein sequence ID" value="CAY46296.1"/>
    <property type="molecule type" value="Genomic_DNA"/>
</dbReference>
<dbReference type="RefSeq" id="WP_003187265.1">
    <property type="nucleotide sequence ID" value="NC_012660.1"/>
</dbReference>
<dbReference type="SMR" id="C3KE41"/>
<dbReference type="STRING" id="294.SRM1_00065"/>
<dbReference type="GeneID" id="97918829"/>
<dbReference type="eggNOG" id="COG0752">
    <property type="taxonomic scope" value="Bacteria"/>
</dbReference>
<dbReference type="HOGENOM" id="CLU_057066_1_0_6"/>
<dbReference type="OrthoDB" id="9802183at2"/>
<dbReference type="GO" id="GO:0005829">
    <property type="term" value="C:cytosol"/>
    <property type="evidence" value="ECO:0007669"/>
    <property type="project" value="TreeGrafter"/>
</dbReference>
<dbReference type="GO" id="GO:0005524">
    <property type="term" value="F:ATP binding"/>
    <property type="evidence" value="ECO:0007669"/>
    <property type="project" value="UniProtKB-UniRule"/>
</dbReference>
<dbReference type="GO" id="GO:0004820">
    <property type="term" value="F:glycine-tRNA ligase activity"/>
    <property type="evidence" value="ECO:0007669"/>
    <property type="project" value="UniProtKB-UniRule"/>
</dbReference>
<dbReference type="GO" id="GO:0006426">
    <property type="term" value="P:glycyl-tRNA aminoacylation"/>
    <property type="evidence" value="ECO:0007669"/>
    <property type="project" value="UniProtKB-UniRule"/>
</dbReference>
<dbReference type="CDD" id="cd00733">
    <property type="entry name" value="GlyRS_alpha_core"/>
    <property type="match status" value="1"/>
</dbReference>
<dbReference type="FunFam" id="3.30.930.10:FF:000006">
    <property type="entry name" value="Glycine--tRNA ligase alpha subunit"/>
    <property type="match status" value="1"/>
</dbReference>
<dbReference type="Gene3D" id="3.30.930.10">
    <property type="entry name" value="Bira Bifunctional Protein, Domain 2"/>
    <property type="match status" value="1"/>
</dbReference>
<dbReference type="Gene3D" id="1.20.58.180">
    <property type="entry name" value="Class II aaRS and biotin synthetases, domain 2"/>
    <property type="match status" value="1"/>
</dbReference>
<dbReference type="HAMAP" id="MF_00254">
    <property type="entry name" value="Gly_tRNA_synth_alpha"/>
    <property type="match status" value="1"/>
</dbReference>
<dbReference type="InterPro" id="IPR045864">
    <property type="entry name" value="aa-tRNA-synth_II/BPL/LPL"/>
</dbReference>
<dbReference type="InterPro" id="IPR006194">
    <property type="entry name" value="Gly-tRNA-synth_heterodimer"/>
</dbReference>
<dbReference type="InterPro" id="IPR002310">
    <property type="entry name" value="Gly-tRNA_ligase_asu"/>
</dbReference>
<dbReference type="NCBIfam" id="TIGR00388">
    <property type="entry name" value="glyQ"/>
    <property type="match status" value="1"/>
</dbReference>
<dbReference type="NCBIfam" id="NF006827">
    <property type="entry name" value="PRK09348.1"/>
    <property type="match status" value="1"/>
</dbReference>
<dbReference type="PANTHER" id="PTHR30075:SF2">
    <property type="entry name" value="GLYCINE--TRNA LIGASE, CHLOROPLASTIC_MITOCHONDRIAL 2"/>
    <property type="match status" value="1"/>
</dbReference>
<dbReference type="PANTHER" id="PTHR30075">
    <property type="entry name" value="GLYCYL-TRNA SYNTHETASE"/>
    <property type="match status" value="1"/>
</dbReference>
<dbReference type="Pfam" id="PF02091">
    <property type="entry name" value="tRNA-synt_2e"/>
    <property type="match status" value="1"/>
</dbReference>
<dbReference type="PRINTS" id="PR01044">
    <property type="entry name" value="TRNASYNTHGA"/>
</dbReference>
<dbReference type="SUPFAM" id="SSF55681">
    <property type="entry name" value="Class II aaRS and biotin synthetases"/>
    <property type="match status" value="1"/>
</dbReference>
<dbReference type="PROSITE" id="PS50861">
    <property type="entry name" value="AA_TRNA_LIGASE_II_GLYAB"/>
    <property type="match status" value="1"/>
</dbReference>
<gene>
    <name evidence="1" type="primary">glyQ</name>
    <name type="ordered locus">PFLU_0011</name>
</gene>
<comment type="catalytic activity">
    <reaction evidence="1">
        <text>tRNA(Gly) + glycine + ATP = glycyl-tRNA(Gly) + AMP + diphosphate</text>
        <dbReference type="Rhea" id="RHEA:16013"/>
        <dbReference type="Rhea" id="RHEA-COMP:9664"/>
        <dbReference type="Rhea" id="RHEA-COMP:9683"/>
        <dbReference type="ChEBI" id="CHEBI:30616"/>
        <dbReference type="ChEBI" id="CHEBI:33019"/>
        <dbReference type="ChEBI" id="CHEBI:57305"/>
        <dbReference type="ChEBI" id="CHEBI:78442"/>
        <dbReference type="ChEBI" id="CHEBI:78522"/>
        <dbReference type="ChEBI" id="CHEBI:456215"/>
        <dbReference type="EC" id="6.1.1.14"/>
    </reaction>
</comment>
<comment type="subunit">
    <text evidence="1">Tetramer of two alpha and two beta subunits.</text>
</comment>
<comment type="subcellular location">
    <subcellularLocation>
        <location evidence="1">Cytoplasm</location>
    </subcellularLocation>
</comment>
<comment type="similarity">
    <text evidence="1">Belongs to the class-II aminoacyl-tRNA synthetase family.</text>
</comment>
<keyword id="KW-0030">Aminoacyl-tRNA synthetase</keyword>
<keyword id="KW-0067">ATP-binding</keyword>
<keyword id="KW-0963">Cytoplasm</keyword>
<keyword id="KW-0436">Ligase</keyword>
<keyword id="KW-0547">Nucleotide-binding</keyword>
<keyword id="KW-0648">Protein biosynthesis</keyword>
<accession>C3KE41</accession>
<name>SYGA_PSEFS</name>
<feature type="chain" id="PRO_1000204592" description="Glycine--tRNA ligase alpha subunit">
    <location>
        <begin position="1"/>
        <end position="317"/>
    </location>
</feature>
<proteinExistence type="inferred from homology"/>
<evidence type="ECO:0000255" key="1">
    <source>
        <dbReference type="HAMAP-Rule" id="MF_00254"/>
    </source>
</evidence>
<protein>
    <recommendedName>
        <fullName evidence="1">Glycine--tRNA ligase alpha subunit</fullName>
        <ecNumber evidence="1">6.1.1.14</ecNumber>
    </recommendedName>
    <alternativeName>
        <fullName evidence="1">Glycyl-tRNA synthetase alpha subunit</fullName>
        <shortName evidence="1">GlyRS</shortName>
    </alternativeName>
</protein>
<reference key="1">
    <citation type="journal article" date="2009" name="Genome Biol.">
        <title>Genomic and genetic analyses of diversity and plant interactions of Pseudomonas fluorescens.</title>
        <authorList>
            <person name="Silby M.W."/>
            <person name="Cerdeno-Tarraga A.M."/>
            <person name="Vernikos G.S."/>
            <person name="Giddens S.R."/>
            <person name="Jackson R.W."/>
            <person name="Preston G.M."/>
            <person name="Zhang X.-X."/>
            <person name="Moon C.D."/>
            <person name="Gehrig S.M."/>
            <person name="Godfrey S.A.C."/>
            <person name="Knight C.G."/>
            <person name="Malone J.G."/>
            <person name="Robinson Z."/>
            <person name="Spiers A.J."/>
            <person name="Harris S."/>
            <person name="Challis G.L."/>
            <person name="Yaxley A.M."/>
            <person name="Harris D."/>
            <person name="Seeger K."/>
            <person name="Murphy L."/>
            <person name="Rutter S."/>
            <person name="Squares R."/>
            <person name="Quail M.A."/>
            <person name="Saunders E."/>
            <person name="Mavromatis K."/>
            <person name="Brettin T.S."/>
            <person name="Bentley S.D."/>
            <person name="Hothersall J."/>
            <person name="Stephens E."/>
            <person name="Thomas C.M."/>
            <person name="Parkhill J."/>
            <person name="Levy S.B."/>
            <person name="Rainey P.B."/>
            <person name="Thomson N.R."/>
        </authorList>
    </citation>
    <scope>NUCLEOTIDE SEQUENCE [LARGE SCALE GENOMIC DNA]</scope>
    <source>
        <strain>SBW25</strain>
    </source>
</reference>
<organism>
    <name type="scientific">Pseudomonas fluorescens (strain SBW25)</name>
    <dbReference type="NCBI Taxonomy" id="216595"/>
    <lineage>
        <taxon>Bacteria</taxon>
        <taxon>Pseudomonadati</taxon>
        <taxon>Pseudomonadota</taxon>
        <taxon>Gammaproteobacteria</taxon>
        <taxon>Pseudomonadales</taxon>
        <taxon>Pseudomonadaceae</taxon>
        <taxon>Pseudomonas</taxon>
    </lineage>
</organism>
<sequence>MSQPTPAVRTFQDLILALQQYWAEQGCVVLQPYDMEVGAGTFHTATFLRAIGPETWNAAYVQPSRRPTDGRYGENPNRLQHYYQFQVVLKPNPDNFQELYLGSLKHVGLDPLVHDIRFVEDNWESPTLGAWGLGWEVWLNGMEVTQFTYFQQAGGIECYPVTGEITYGLERLAMYLQGVDSVYDLVWADGPFGKVTYGDVFHQNEVEQSTYNFEHANVDKLFELFDFYESEAKRLIELDQPLPLPSYEMVLKASHTFNLLDARRAISVTARQQYILRVRTLARSVAQAYLLARAKLGFPMATPDLRDEVLAKLEAAQ</sequence>